<sequence>MMSVQKANTVSRQKATGAHFTPDKLAEVIAKRILDYFKGEKNRVIRVLDPACGDGELLLAINKVAQSMNIQLELIGVDFDIDAINIANERLSRSGHKNFRLINKDFLEMVSEGDNYDLFNIEELEPVDIIIANPPYVRTQILGAEKAQKLREKFNLKGRVDLYQAFLVAMTQQLKSNGIIGVITSNRYLTTKGGGSTRKFLVSNFNILEIMDLGDSKFFEAAVLPAIFFGEKKNKEYQKENSNVPKFFKIYEQSDIEASSSVNSEFNSLIELLEVNKSGLYSVEDKTYSISLGKIISPENYKEPWILATEDEYEWFMKVNQNAYGFIEDFAHVKVGIKTTADSVFIRSDWGELPEEQIPEDKLLRPIISADQANKWSVSLVGNNKKVLYTHEIRDGQIKAINLEEFPRAKNYLESHKERLASRKYVLKANRNWYEIWVPHDPSLWDKPKIIFPDTSPEPKFFYEDKGSVVDGNCYWIIPKKENSNDILFLIMGICNSKFMSKYHDIAFQNKLYAGRRRYLTQYVNKYPIPDPESIYSKEIISLVRELVNNKKETQDINEIENRIEKLILRAFDIESLKY</sequence>
<organism>
    <name type="scientific">Geobacillus stearothermophilus</name>
    <name type="common">Bacillus stearothermophilus</name>
    <dbReference type="NCBI Taxonomy" id="1422"/>
    <lineage>
        <taxon>Bacteria</taxon>
        <taxon>Bacillati</taxon>
        <taxon>Bacillota</taxon>
        <taxon>Bacilli</taxon>
        <taxon>Bacillales</taxon>
        <taxon>Anoxybacillaceae</taxon>
        <taxon>Geobacillus</taxon>
    </lineage>
</organism>
<dbReference type="EC" id="2.1.1.72"/>
<dbReference type="EMBL" id="X79509">
    <property type="protein sequence ID" value="CAA56041.1"/>
    <property type="molecule type" value="Genomic_DNA"/>
</dbReference>
<dbReference type="PIR" id="I40371">
    <property type="entry name" value="I40371"/>
</dbReference>
<dbReference type="PDB" id="7QW5">
    <property type="method" value="X-ray"/>
    <property type="resolution" value="2.30 A"/>
    <property type="chains" value="A=1-579"/>
</dbReference>
<dbReference type="PDB" id="7QW6">
    <property type="method" value="X-ray"/>
    <property type="resolution" value="2.40 A"/>
    <property type="chains" value="A=1-579"/>
</dbReference>
<dbReference type="PDB" id="7QW7">
    <property type="method" value="X-ray"/>
    <property type="resolution" value="2.60 A"/>
    <property type="chains" value="A=1-579"/>
</dbReference>
<dbReference type="PDB" id="7QW8">
    <property type="method" value="X-ray"/>
    <property type="resolution" value="2.50 A"/>
    <property type="chains" value="A/B=1-579"/>
</dbReference>
<dbReference type="PDBsum" id="7QW5"/>
<dbReference type="PDBsum" id="7QW6"/>
<dbReference type="PDBsum" id="7QW7"/>
<dbReference type="PDBsum" id="7QW8"/>
<dbReference type="SMR" id="P43423"/>
<dbReference type="REBASE" id="3536">
    <property type="entry name" value="M.BseCI"/>
</dbReference>
<dbReference type="BRENDA" id="2.1.1.72">
    <property type="organism ID" value="623"/>
</dbReference>
<dbReference type="PRO" id="PR:P43423"/>
<dbReference type="GO" id="GO:0003677">
    <property type="term" value="F:DNA binding"/>
    <property type="evidence" value="ECO:0007669"/>
    <property type="project" value="UniProtKB-KW"/>
</dbReference>
<dbReference type="GO" id="GO:0009007">
    <property type="term" value="F:site-specific DNA-methyltransferase (adenine-specific) activity"/>
    <property type="evidence" value="ECO:0007669"/>
    <property type="project" value="UniProtKB-EC"/>
</dbReference>
<dbReference type="GO" id="GO:0009307">
    <property type="term" value="P:DNA restriction-modification system"/>
    <property type="evidence" value="ECO:0007669"/>
    <property type="project" value="UniProtKB-KW"/>
</dbReference>
<dbReference type="GO" id="GO:0032259">
    <property type="term" value="P:methylation"/>
    <property type="evidence" value="ECO:0007669"/>
    <property type="project" value="UniProtKB-KW"/>
</dbReference>
<dbReference type="CDD" id="cd02440">
    <property type="entry name" value="AdoMet_MTases"/>
    <property type="match status" value="1"/>
</dbReference>
<dbReference type="Gene3D" id="3.40.50.150">
    <property type="entry name" value="Vaccinia Virus protein VP39"/>
    <property type="match status" value="1"/>
</dbReference>
<dbReference type="InterPro" id="IPR002052">
    <property type="entry name" value="DNA_methylase_N6_adenine_CS"/>
</dbReference>
<dbReference type="InterPro" id="IPR011639">
    <property type="entry name" value="MethylTrfase_TaqI-like_dom"/>
</dbReference>
<dbReference type="InterPro" id="IPR050953">
    <property type="entry name" value="N4_N6_ade-DNA_methylase"/>
</dbReference>
<dbReference type="InterPro" id="IPR029063">
    <property type="entry name" value="SAM-dependent_MTases_sf"/>
</dbReference>
<dbReference type="InterPro" id="IPR025931">
    <property type="entry name" value="TaqI_C"/>
</dbReference>
<dbReference type="PANTHER" id="PTHR33841:SF1">
    <property type="entry name" value="DNA METHYLTRANSFERASE A"/>
    <property type="match status" value="1"/>
</dbReference>
<dbReference type="PANTHER" id="PTHR33841">
    <property type="entry name" value="DNA METHYLTRANSFERASE YEEA-RELATED"/>
    <property type="match status" value="1"/>
</dbReference>
<dbReference type="Pfam" id="PF07669">
    <property type="entry name" value="Eco57I"/>
    <property type="match status" value="1"/>
</dbReference>
<dbReference type="Pfam" id="PF12950">
    <property type="entry name" value="TaqI_C"/>
    <property type="match status" value="1"/>
</dbReference>
<dbReference type="PRINTS" id="PR00507">
    <property type="entry name" value="N12N6MTFRASE"/>
</dbReference>
<dbReference type="SUPFAM" id="SSF53335">
    <property type="entry name" value="S-adenosyl-L-methionine-dependent methyltransferases"/>
    <property type="match status" value="1"/>
</dbReference>
<dbReference type="PROSITE" id="PS00092">
    <property type="entry name" value="N6_MTASE"/>
    <property type="match status" value="1"/>
</dbReference>
<feature type="chain" id="PRO_0000087944" description="Type II methyltransferase M.BseCI">
    <location>
        <begin position="1"/>
        <end position="579"/>
    </location>
</feature>
<feature type="helix" evidence="4">
    <location>
        <begin position="12"/>
        <end position="16"/>
    </location>
</feature>
<feature type="helix" evidence="4">
    <location>
        <begin position="23"/>
        <end position="36"/>
    </location>
</feature>
<feature type="strand" evidence="4">
    <location>
        <begin position="45"/>
        <end position="49"/>
    </location>
</feature>
<feature type="turn" evidence="5">
    <location>
        <begin position="53"/>
        <end position="55"/>
    </location>
</feature>
<feature type="helix" evidence="4">
    <location>
        <begin position="56"/>
        <end position="66"/>
    </location>
</feature>
<feature type="turn" evidence="4">
    <location>
        <begin position="67"/>
        <end position="69"/>
    </location>
</feature>
<feature type="strand" evidence="4">
    <location>
        <begin position="72"/>
        <end position="77"/>
    </location>
</feature>
<feature type="helix" evidence="4">
    <location>
        <begin position="81"/>
        <end position="93"/>
    </location>
</feature>
<feature type="strand" evidence="4">
    <location>
        <begin position="98"/>
        <end position="102"/>
    </location>
</feature>
<feature type="helix" evidence="7">
    <location>
        <begin position="106"/>
        <end position="109"/>
    </location>
</feature>
<feature type="strand" evidence="4">
    <location>
        <begin position="127"/>
        <end position="132"/>
    </location>
</feature>
<feature type="helix" evidence="4">
    <location>
        <begin position="139"/>
        <end position="154"/>
    </location>
</feature>
<feature type="helix" evidence="4">
    <location>
        <begin position="162"/>
        <end position="171"/>
    </location>
</feature>
<feature type="strand" evidence="4">
    <location>
        <begin position="174"/>
        <end position="185"/>
    </location>
</feature>
<feature type="helix" evidence="4">
    <location>
        <begin position="186"/>
        <end position="189"/>
    </location>
</feature>
<feature type="helix" evidence="4">
    <location>
        <begin position="192"/>
        <end position="194"/>
    </location>
</feature>
<feature type="helix" evidence="4">
    <location>
        <begin position="195"/>
        <end position="204"/>
    </location>
</feature>
<feature type="strand" evidence="4">
    <location>
        <begin position="205"/>
        <end position="212"/>
    </location>
</feature>
<feature type="strand" evidence="4">
    <location>
        <begin position="219"/>
        <end position="222"/>
    </location>
</feature>
<feature type="strand" evidence="4">
    <location>
        <begin position="225"/>
        <end position="232"/>
    </location>
</feature>
<feature type="strand" evidence="4">
    <location>
        <begin position="246"/>
        <end position="252"/>
    </location>
</feature>
<feature type="helix" evidence="4">
    <location>
        <begin position="269"/>
        <end position="274"/>
    </location>
</feature>
<feature type="strand" evidence="4">
    <location>
        <begin position="279"/>
        <end position="281"/>
    </location>
</feature>
<feature type="strand" evidence="4">
    <location>
        <begin position="288"/>
        <end position="294"/>
    </location>
</feature>
<feature type="helix" evidence="4">
    <location>
        <begin position="310"/>
        <end position="321"/>
    </location>
</feature>
<feature type="helix" evidence="4">
    <location>
        <begin position="327"/>
        <end position="330"/>
    </location>
</feature>
<feature type="strand" evidence="4">
    <location>
        <begin position="331"/>
        <end position="335"/>
    </location>
</feature>
<feature type="helix" evidence="4">
    <location>
        <begin position="342"/>
        <end position="345"/>
    </location>
</feature>
<feature type="strand" evidence="4">
    <location>
        <begin position="346"/>
        <end position="348"/>
    </location>
</feature>
<feature type="strand" evidence="4">
    <location>
        <begin position="350"/>
        <end position="353"/>
    </location>
</feature>
<feature type="turn" evidence="4">
    <location>
        <begin position="355"/>
        <end position="357"/>
    </location>
</feature>
<feature type="turn" evidence="4">
    <location>
        <begin position="361"/>
        <end position="363"/>
    </location>
</feature>
<feature type="strand" evidence="4">
    <location>
        <begin position="364"/>
        <end position="368"/>
    </location>
</feature>
<feature type="helix" evidence="4">
    <location>
        <begin position="370"/>
        <end position="372"/>
    </location>
</feature>
<feature type="strand" evidence="4">
    <location>
        <begin position="375"/>
        <end position="377"/>
    </location>
</feature>
<feature type="helix" evidence="5">
    <location>
        <begin position="380"/>
        <end position="382"/>
    </location>
</feature>
<feature type="strand" evidence="4">
    <location>
        <begin position="386"/>
        <end position="388"/>
    </location>
</feature>
<feature type="strand" evidence="4">
    <location>
        <begin position="391"/>
        <end position="393"/>
    </location>
</feature>
<feature type="strand" evidence="4">
    <location>
        <begin position="395"/>
        <end position="400"/>
    </location>
</feature>
<feature type="helix" evidence="4">
    <location>
        <begin position="403"/>
        <end position="405"/>
    </location>
</feature>
<feature type="helix" evidence="4">
    <location>
        <begin position="407"/>
        <end position="415"/>
    </location>
</feature>
<feature type="helix" evidence="4">
    <location>
        <begin position="417"/>
        <end position="421"/>
    </location>
</feature>
<feature type="helix" evidence="4">
    <location>
        <begin position="424"/>
        <end position="428"/>
    </location>
</feature>
<feature type="helix" evidence="5">
    <location>
        <begin position="444"/>
        <end position="446"/>
    </location>
</feature>
<feature type="strand" evidence="4">
    <location>
        <begin position="449"/>
        <end position="458"/>
    </location>
</feature>
<feature type="strand" evidence="4">
    <location>
        <begin position="462"/>
        <end position="464"/>
    </location>
</feature>
<feature type="strand" evidence="4">
    <location>
        <begin position="474"/>
        <end position="482"/>
    </location>
</feature>
<feature type="turn" evidence="6">
    <location>
        <begin position="484"/>
        <end position="486"/>
    </location>
</feature>
<feature type="helix" evidence="4">
    <location>
        <begin position="487"/>
        <end position="495"/>
    </location>
</feature>
<feature type="helix" evidence="4">
    <location>
        <begin position="498"/>
        <end position="507"/>
    </location>
</feature>
<feature type="helix" evidence="4">
    <location>
        <begin position="513"/>
        <end position="515"/>
    </location>
</feature>
<feature type="helix" evidence="4">
    <location>
        <begin position="521"/>
        <end position="524"/>
    </location>
</feature>
<feature type="helix" evidence="4">
    <location>
        <begin position="535"/>
        <end position="549"/>
    </location>
</feature>
<feature type="helix" evidence="4">
    <location>
        <begin position="557"/>
        <end position="572"/>
    </location>
</feature>
<protein>
    <recommendedName>
        <fullName evidence="1">Type II methyltransferase M.BseCI</fullName>
        <shortName evidence="1">M.BseCI</shortName>
        <ecNumber>2.1.1.72</ecNumber>
    </recommendedName>
    <alternativeName>
        <fullName>Adenine-specific methyltransferase BseCI</fullName>
    </alternativeName>
    <alternativeName>
        <fullName>Modification methylase BseCI</fullName>
    </alternativeName>
</protein>
<reference key="1">
    <citation type="journal article" date="1994" name="Gene">
        <title>Sequence of the cloned bseCIM gene: M.BseCI reveals high homology to M.BanIII.</title>
        <authorList>
            <person name="Rina M."/>
            <person name="Markaki M."/>
            <person name="Bouriotis V."/>
        </authorList>
    </citation>
    <scope>NUCLEOTIDE SEQUENCE [GENOMIC DNA]</scope>
</reference>
<reference key="2">
    <citation type="journal article" date="2003" name="Nucleic Acids Res.">
        <title>A nomenclature for restriction enzymes, DNA methyltransferases, homing endonucleases and their genes.</title>
        <authorList>
            <person name="Roberts R.J."/>
            <person name="Belfort M."/>
            <person name="Bestor T."/>
            <person name="Bhagwat A.S."/>
            <person name="Bickle T.A."/>
            <person name="Bitinaite J."/>
            <person name="Blumenthal R.M."/>
            <person name="Degtyarev S.K."/>
            <person name="Dryden D.T."/>
            <person name="Dybvig K."/>
            <person name="Firman K."/>
            <person name="Gromova E.S."/>
            <person name="Gumport R.I."/>
            <person name="Halford S.E."/>
            <person name="Hattman S."/>
            <person name="Heitman J."/>
            <person name="Hornby D.P."/>
            <person name="Janulaitis A."/>
            <person name="Jeltsch A."/>
            <person name="Josephsen J."/>
            <person name="Kiss A."/>
            <person name="Klaenhammer T.R."/>
            <person name="Kobayashi I."/>
            <person name="Kong H."/>
            <person name="Krueger D.H."/>
            <person name="Lacks S."/>
            <person name="Marinus M.G."/>
            <person name="Miyahara M."/>
            <person name="Morgan R.D."/>
            <person name="Murray N.E."/>
            <person name="Nagaraja V."/>
            <person name="Piekarowicz A."/>
            <person name="Pingoud A."/>
            <person name="Raleigh E."/>
            <person name="Rao D.N."/>
            <person name="Reich N."/>
            <person name="Repin V.E."/>
            <person name="Selker E.U."/>
            <person name="Shaw P.C."/>
            <person name="Stein D.C."/>
            <person name="Stoddard B.L."/>
            <person name="Szybalski W."/>
            <person name="Trautner T.A."/>
            <person name="Van Etten J.L."/>
            <person name="Vitor J.M."/>
            <person name="Wilson G.G."/>
            <person name="Xu S.Y."/>
        </authorList>
    </citation>
    <scope>NOMENCLATURE</scope>
    <scope>SUBTYPE</scope>
</reference>
<evidence type="ECO:0000303" key="1">
    <source>
    </source>
</evidence>
<evidence type="ECO:0000303" key="2">
    <source>
    </source>
</evidence>
<evidence type="ECO:0000305" key="3"/>
<evidence type="ECO:0007829" key="4">
    <source>
        <dbReference type="PDB" id="7QW5"/>
    </source>
</evidence>
<evidence type="ECO:0007829" key="5">
    <source>
        <dbReference type="PDB" id="7QW6"/>
    </source>
</evidence>
<evidence type="ECO:0007829" key="6">
    <source>
        <dbReference type="PDB" id="7QW7"/>
    </source>
</evidence>
<evidence type="ECO:0007829" key="7">
    <source>
        <dbReference type="PDB" id="7QW8"/>
    </source>
</evidence>
<proteinExistence type="evidence at protein level"/>
<name>MTC1_GEOSE</name>
<gene>
    <name evidence="2" type="primary">bseCIM</name>
</gene>
<accession>P43423</accession>
<keyword id="KW-0002">3D-structure</keyword>
<keyword id="KW-0238">DNA-binding</keyword>
<keyword id="KW-0489">Methyltransferase</keyword>
<keyword id="KW-0680">Restriction system</keyword>
<keyword id="KW-0949">S-adenosyl-L-methionine</keyword>
<keyword id="KW-0808">Transferase</keyword>
<comment type="function">
    <text evidence="1">A gamma subtype methylase, recognizes the double-stranded sequence 5'-ATCGAT-3', methylation on A-5 on both strands, and protects the DNA from cleavage by the BanIII endonuclease.</text>
</comment>
<comment type="catalytic activity">
    <reaction>
        <text>a 2'-deoxyadenosine in DNA + S-adenosyl-L-methionine = an N(6)-methyl-2'-deoxyadenosine in DNA + S-adenosyl-L-homocysteine + H(+)</text>
        <dbReference type="Rhea" id="RHEA:15197"/>
        <dbReference type="Rhea" id="RHEA-COMP:12418"/>
        <dbReference type="Rhea" id="RHEA-COMP:12419"/>
        <dbReference type="ChEBI" id="CHEBI:15378"/>
        <dbReference type="ChEBI" id="CHEBI:57856"/>
        <dbReference type="ChEBI" id="CHEBI:59789"/>
        <dbReference type="ChEBI" id="CHEBI:90615"/>
        <dbReference type="ChEBI" id="CHEBI:90616"/>
        <dbReference type="EC" id="2.1.1.72"/>
    </reaction>
</comment>
<comment type="similarity">
    <text evidence="3">Belongs to the N(4)/N(6)-methyltransferase family.</text>
</comment>